<reference key="1">
    <citation type="journal article" date="2010" name="ISME J.">
        <title>The complete genome sequence of the algal symbiont Dinoroseobacter shibae: a hitchhiker's guide to life in the sea.</title>
        <authorList>
            <person name="Wagner-Dobler I."/>
            <person name="Ballhausen B."/>
            <person name="Berger M."/>
            <person name="Brinkhoff T."/>
            <person name="Buchholz I."/>
            <person name="Bunk B."/>
            <person name="Cypionka H."/>
            <person name="Daniel R."/>
            <person name="Drepper T."/>
            <person name="Gerdts G."/>
            <person name="Hahnke S."/>
            <person name="Han C."/>
            <person name="Jahn D."/>
            <person name="Kalhoefer D."/>
            <person name="Kiss H."/>
            <person name="Klenk H.P."/>
            <person name="Kyrpides N."/>
            <person name="Liebl W."/>
            <person name="Liesegang H."/>
            <person name="Meincke L."/>
            <person name="Pati A."/>
            <person name="Petersen J."/>
            <person name="Piekarski T."/>
            <person name="Pommerenke C."/>
            <person name="Pradella S."/>
            <person name="Pukall R."/>
            <person name="Rabus R."/>
            <person name="Stackebrandt E."/>
            <person name="Thole S."/>
            <person name="Thompson L."/>
            <person name="Tielen P."/>
            <person name="Tomasch J."/>
            <person name="von Jan M."/>
            <person name="Wanphrut N."/>
            <person name="Wichels A."/>
            <person name="Zech H."/>
            <person name="Simon M."/>
        </authorList>
    </citation>
    <scope>NUCLEOTIDE SEQUENCE [LARGE SCALE GENOMIC DNA]</scope>
    <source>
        <strain>DSM 16493 / NCIMB 14021 / DFL 12</strain>
    </source>
</reference>
<gene>
    <name evidence="1" type="primary">bchB</name>
    <name type="ordered locus">Dshi_3535</name>
</gene>
<dbReference type="EC" id="1.3.7.7" evidence="1"/>
<dbReference type="EMBL" id="CP000830">
    <property type="protein sequence ID" value="ABV95268.1"/>
    <property type="molecule type" value="Genomic_DNA"/>
</dbReference>
<dbReference type="RefSeq" id="WP_012180191.1">
    <property type="nucleotide sequence ID" value="NC_009952.1"/>
</dbReference>
<dbReference type="SMR" id="A8LQ28"/>
<dbReference type="STRING" id="398580.Dshi_3535"/>
<dbReference type="KEGG" id="dsh:Dshi_3535"/>
<dbReference type="eggNOG" id="COG2710">
    <property type="taxonomic scope" value="Bacteria"/>
</dbReference>
<dbReference type="HOGENOM" id="CLU_025470_0_0_5"/>
<dbReference type="OrthoDB" id="5717231at2"/>
<dbReference type="UniPathway" id="UPA00671"/>
<dbReference type="Proteomes" id="UP000006833">
    <property type="component" value="Chromosome"/>
</dbReference>
<dbReference type="GO" id="GO:0051539">
    <property type="term" value="F:4 iron, 4 sulfur cluster binding"/>
    <property type="evidence" value="ECO:0007669"/>
    <property type="project" value="UniProtKB-UniRule"/>
</dbReference>
<dbReference type="GO" id="GO:0005524">
    <property type="term" value="F:ATP binding"/>
    <property type="evidence" value="ECO:0007669"/>
    <property type="project" value="UniProtKB-UniRule"/>
</dbReference>
<dbReference type="GO" id="GO:0046872">
    <property type="term" value="F:metal ion binding"/>
    <property type="evidence" value="ECO:0007669"/>
    <property type="project" value="UniProtKB-KW"/>
</dbReference>
<dbReference type="GO" id="GO:0016730">
    <property type="term" value="F:oxidoreductase activity, acting on iron-sulfur proteins as donors"/>
    <property type="evidence" value="ECO:0007669"/>
    <property type="project" value="InterPro"/>
</dbReference>
<dbReference type="GO" id="GO:0016636">
    <property type="term" value="F:oxidoreductase activity, acting on the CH-CH group of donors, iron-sulfur protein as acceptor"/>
    <property type="evidence" value="ECO:0007669"/>
    <property type="project" value="UniProtKB-UniRule"/>
</dbReference>
<dbReference type="GO" id="GO:0036070">
    <property type="term" value="P:light-independent bacteriochlorophyll biosynthetic process"/>
    <property type="evidence" value="ECO:0007669"/>
    <property type="project" value="UniProtKB-UniRule"/>
</dbReference>
<dbReference type="GO" id="GO:0019685">
    <property type="term" value="P:photosynthesis, dark reaction"/>
    <property type="evidence" value="ECO:0007669"/>
    <property type="project" value="InterPro"/>
</dbReference>
<dbReference type="Gene3D" id="1.20.89.20">
    <property type="match status" value="1"/>
</dbReference>
<dbReference type="Gene3D" id="3.40.50.1980">
    <property type="entry name" value="Nitrogenase molybdenum iron protein domain"/>
    <property type="match status" value="3"/>
</dbReference>
<dbReference type="Gene3D" id="1.10.8.550">
    <property type="entry name" value="Proto-chlorophyllide reductase 57 kD subunit B"/>
    <property type="match status" value="1"/>
</dbReference>
<dbReference type="HAMAP" id="MF_00353">
    <property type="entry name" value="ChlB_BchB"/>
    <property type="match status" value="1"/>
</dbReference>
<dbReference type="InterPro" id="IPR050152">
    <property type="entry name" value="ChlB/BchB/BchZ"/>
</dbReference>
<dbReference type="InterPro" id="IPR013580">
    <property type="entry name" value="LI-POR_suB-like_C"/>
</dbReference>
<dbReference type="InterPro" id="IPR000510">
    <property type="entry name" value="Nase/OxRdtase_comp1"/>
</dbReference>
<dbReference type="InterPro" id="IPR042298">
    <property type="entry name" value="P-CP_red_C"/>
</dbReference>
<dbReference type="InterPro" id="IPR005969">
    <property type="entry name" value="Protochl_reductB"/>
</dbReference>
<dbReference type="InterPro" id="IPR016209">
    <property type="entry name" value="Protochlorophyllide_Rdtase"/>
</dbReference>
<dbReference type="NCBIfam" id="TIGR01278">
    <property type="entry name" value="DPOR_BchB"/>
    <property type="match status" value="1"/>
</dbReference>
<dbReference type="PANTHER" id="PTHR33712">
    <property type="entry name" value="LIGHT-INDEPENDENT PROTOCHLOROPHYLLIDE REDUCTASE SUBUNIT B"/>
    <property type="match status" value="1"/>
</dbReference>
<dbReference type="PANTHER" id="PTHR33712:SF7">
    <property type="entry name" value="LIGHT-INDEPENDENT PROTOCHLOROPHYLLIDE REDUCTASE SUBUNIT B"/>
    <property type="match status" value="1"/>
</dbReference>
<dbReference type="Pfam" id="PF00148">
    <property type="entry name" value="Oxidored_nitro"/>
    <property type="match status" value="1"/>
</dbReference>
<dbReference type="Pfam" id="PF08369">
    <property type="entry name" value="PCP_red"/>
    <property type="match status" value="1"/>
</dbReference>
<dbReference type="PIRSF" id="PIRSF000163">
    <property type="entry name" value="PCP_ChlB"/>
    <property type="match status" value="1"/>
</dbReference>
<dbReference type="SUPFAM" id="SSF53807">
    <property type="entry name" value="Helical backbone' metal receptor"/>
    <property type="match status" value="1"/>
</dbReference>
<feature type="chain" id="PRO_0000324042" description="Light-independent protochlorophyllide reductase subunit B">
    <location>
        <begin position="1"/>
        <end position="528"/>
    </location>
</feature>
<feature type="region of interest" description="Disordered" evidence="2">
    <location>
        <begin position="429"/>
        <end position="471"/>
    </location>
</feature>
<feature type="compositionally biased region" description="Low complexity" evidence="2">
    <location>
        <begin position="444"/>
        <end position="465"/>
    </location>
</feature>
<feature type="active site" description="Proton donor" evidence="1">
    <location>
        <position position="274"/>
    </location>
</feature>
<feature type="binding site" evidence="1">
    <location>
        <position position="36"/>
    </location>
    <ligand>
        <name>[4Fe-4S] cluster</name>
        <dbReference type="ChEBI" id="CHEBI:49883"/>
        <note>ligand shared with heterodimeric partner</note>
    </ligand>
</feature>
<feature type="binding site" evidence="1">
    <location>
        <begin position="409"/>
        <end position="410"/>
    </location>
    <ligand>
        <name>substrate</name>
    </ligand>
</feature>
<name>BCHB_DINSH</name>
<evidence type="ECO:0000255" key="1">
    <source>
        <dbReference type="HAMAP-Rule" id="MF_00353"/>
    </source>
</evidence>
<evidence type="ECO:0000256" key="2">
    <source>
        <dbReference type="SAM" id="MobiDB-lite"/>
    </source>
</evidence>
<organism>
    <name type="scientific">Dinoroseobacter shibae (strain DSM 16493 / NCIMB 14021 / DFL 12)</name>
    <dbReference type="NCBI Taxonomy" id="398580"/>
    <lineage>
        <taxon>Bacteria</taxon>
        <taxon>Pseudomonadati</taxon>
        <taxon>Pseudomonadota</taxon>
        <taxon>Alphaproteobacteria</taxon>
        <taxon>Rhodobacterales</taxon>
        <taxon>Roseobacteraceae</taxon>
        <taxon>Dinoroseobacter</taxon>
    </lineage>
</organism>
<sequence>MKLTVWTYEGPPHVGAMRVATGMTGLHYVLHAPQGDTYADLLFTMIERRDHRPPVSYTTFQARDLGSDTAHLFKDSCRDAYERFKPEAIIVGASCTAELIQDDPGGLAETMGLPIPVIALELPSYQRKENFGCDETFFQIVRALAKPVEKTARVSCNILGPTGLGFRHRDDVEELTGLLSEMGVDVNVVAPMRSSPSDIARLGAAHFNVMLYPETCEAACRHLERAFQQPYTKTVPIGVGATRDFIAEVQGLTGVTGAPDENRLRLPWWSASVDSTYLTGKRVFLFGDATHVKASARIARDEMGFEVVGLGCYNREFARDIRKLAKEFGLEALITDDYLEVEKAIEEAAPEMILGTQMERHIGKRLGIPCAVISAPVHVQDFPARYSPQVGFEGANVIFDTWIHPLVMGLEEHLLAMFREDFEFHDAAGPSHHGGHAPKPMHDAPAASAAAGAEASMAEETAAPSQDAPAATGGDVTVWLADAEKELKKIPFFVRGKAKRNTEKYALEQGVTEISVDTLYEAKAHYAR</sequence>
<keyword id="KW-0004">4Fe-4S</keyword>
<keyword id="KW-0067">ATP-binding</keyword>
<keyword id="KW-0077">Bacteriochlorophyll biosynthesis</keyword>
<keyword id="KW-0149">Chlorophyll biosynthesis</keyword>
<keyword id="KW-0408">Iron</keyword>
<keyword id="KW-0411">Iron-sulfur</keyword>
<keyword id="KW-0479">Metal-binding</keyword>
<keyword id="KW-0547">Nucleotide-binding</keyword>
<keyword id="KW-0560">Oxidoreductase</keyword>
<keyword id="KW-0602">Photosynthesis</keyword>
<keyword id="KW-1185">Reference proteome</keyword>
<comment type="function">
    <text evidence="1">Component of the dark-operative protochlorophyllide reductase (DPOR) that uses Mg-ATP and reduced ferredoxin to reduce ring D of protochlorophyllide (Pchlide) to form chlorophyllide a (Chlide). This reaction is light-independent. The NB-protein (BchN-BchB) is the catalytic component of the complex.</text>
</comment>
<comment type="catalytic activity">
    <reaction evidence="1">
        <text>chlorophyllide a + oxidized 2[4Fe-4S]-[ferredoxin] + 2 ADP + 2 phosphate = protochlorophyllide a + reduced 2[4Fe-4S]-[ferredoxin] + 2 ATP + 2 H2O</text>
        <dbReference type="Rhea" id="RHEA:28202"/>
        <dbReference type="Rhea" id="RHEA-COMP:10002"/>
        <dbReference type="Rhea" id="RHEA-COMP:10004"/>
        <dbReference type="ChEBI" id="CHEBI:15377"/>
        <dbReference type="ChEBI" id="CHEBI:30616"/>
        <dbReference type="ChEBI" id="CHEBI:33722"/>
        <dbReference type="ChEBI" id="CHEBI:33723"/>
        <dbReference type="ChEBI" id="CHEBI:43474"/>
        <dbReference type="ChEBI" id="CHEBI:83348"/>
        <dbReference type="ChEBI" id="CHEBI:83350"/>
        <dbReference type="ChEBI" id="CHEBI:456216"/>
        <dbReference type="EC" id="1.3.7.7"/>
    </reaction>
</comment>
<comment type="cofactor">
    <cofactor evidence="1">
        <name>[4Fe-4S] cluster</name>
        <dbReference type="ChEBI" id="CHEBI:49883"/>
    </cofactor>
    <text evidence="1">Binds 1 [4Fe-4S] cluster per heterodimer. The cluster is bound at the heterodimer interface by residues from both subunits.</text>
</comment>
<comment type="pathway">
    <text evidence="1">Porphyrin-containing compound metabolism; bacteriochlorophyll biosynthesis (light-independent).</text>
</comment>
<comment type="subunit">
    <text evidence="1">Protochlorophyllide reductase is composed of three subunits; BchL, BchN and BchB. Forms a heterotetramer of two BchB and two BchN subunits.</text>
</comment>
<comment type="similarity">
    <text evidence="1">Belongs to the ChlB/BchB/BchZ family.</text>
</comment>
<protein>
    <recommendedName>
        <fullName evidence="1">Light-independent protochlorophyllide reductase subunit B</fullName>
        <shortName evidence="1">DPOR subunit B</shortName>
        <shortName evidence="1">LI-POR subunit B</shortName>
        <ecNumber evidence="1">1.3.7.7</ecNumber>
    </recommendedName>
</protein>
<accession>A8LQ28</accession>
<proteinExistence type="inferred from homology"/>